<comment type="subcellular location">
    <subcellularLocation>
        <location evidence="2">Cytoplasm</location>
    </subcellularLocation>
    <subcellularLocation>
        <location evidence="2">Nucleus membrane</location>
        <topology evidence="2">Multi-pass membrane protein</topology>
    </subcellularLocation>
</comment>
<comment type="similarity">
    <text evidence="3">Belongs to the TMCO4 family.</text>
</comment>
<reference key="1">
    <citation type="journal article" date="2002" name="Nature">
        <title>The genome sequence of Schizosaccharomyces pombe.</title>
        <authorList>
            <person name="Wood V."/>
            <person name="Gwilliam R."/>
            <person name="Rajandream M.A."/>
            <person name="Lyne M.H."/>
            <person name="Lyne R."/>
            <person name="Stewart A."/>
            <person name="Sgouros J.G."/>
            <person name="Peat N."/>
            <person name="Hayles J."/>
            <person name="Baker S.G."/>
            <person name="Basham D."/>
            <person name="Bowman S."/>
            <person name="Brooks K."/>
            <person name="Brown D."/>
            <person name="Brown S."/>
            <person name="Chillingworth T."/>
            <person name="Churcher C.M."/>
            <person name="Collins M."/>
            <person name="Connor R."/>
            <person name="Cronin A."/>
            <person name="Davis P."/>
            <person name="Feltwell T."/>
            <person name="Fraser A."/>
            <person name="Gentles S."/>
            <person name="Goble A."/>
            <person name="Hamlin N."/>
            <person name="Harris D.E."/>
            <person name="Hidalgo J."/>
            <person name="Hodgson G."/>
            <person name="Holroyd S."/>
            <person name="Hornsby T."/>
            <person name="Howarth S."/>
            <person name="Huckle E.J."/>
            <person name="Hunt S."/>
            <person name="Jagels K."/>
            <person name="James K.D."/>
            <person name="Jones L."/>
            <person name="Jones M."/>
            <person name="Leather S."/>
            <person name="McDonald S."/>
            <person name="McLean J."/>
            <person name="Mooney P."/>
            <person name="Moule S."/>
            <person name="Mungall K.L."/>
            <person name="Murphy L.D."/>
            <person name="Niblett D."/>
            <person name="Odell C."/>
            <person name="Oliver K."/>
            <person name="O'Neil S."/>
            <person name="Pearson D."/>
            <person name="Quail M.A."/>
            <person name="Rabbinowitsch E."/>
            <person name="Rutherford K.M."/>
            <person name="Rutter S."/>
            <person name="Saunders D."/>
            <person name="Seeger K."/>
            <person name="Sharp S."/>
            <person name="Skelton J."/>
            <person name="Simmonds M.N."/>
            <person name="Squares R."/>
            <person name="Squares S."/>
            <person name="Stevens K."/>
            <person name="Taylor K."/>
            <person name="Taylor R.G."/>
            <person name="Tivey A."/>
            <person name="Walsh S.V."/>
            <person name="Warren T."/>
            <person name="Whitehead S."/>
            <person name="Woodward J.R."/>
            <person name="Volckaert G."/>
            <person name="Aert R."/>
            <person name="Robben J."/>
            <person name="Grymonprez B."/>
            <person name="Weltjens I."/>
            <person name="Vanstreels E."/>
            <person name="Rieger M."/>
            <person name="Schaefer M."/>
            <person name="Mueller-Auer S."/>
            <person name="Gabel C."/>
            <person name="Fuchs M."/>
            <person name="Duesterhoeft A."/>
            <person name="Fritzc C."/>
            <person name="Holzer E."/>
            <person name="Moestl D."/>
            <person name="Hilbert H."/>
            <person name="Borzym K."/>
            <person name="Langer I."/>
            <person name="Beck A."/>
            <person name="Lehrach H."/>
            <person name="Reinhardt R."/>
            <person name="Pohl T.M."/>
            <person name="Eger P."/>
            <person name="Zimmermann W."/>
            <person name="Wedler H."/>
            <person name="Wambutt R."/>
            <person name="Purnelle B."/>
            <person name="Goffeau A."/>
            <person name="Cadieu E."/>
            <person name="Dreano S."/>
            <person name="Gloux S."/>
            <person name="Lelaure V."/>
            <person name="Mottier S."/>
            <person name="Galibert F."/>
            <person name="Aves S.J."/>
            <person name="Xiang Z."/>
            <person name="Hunt C."/>
            <person name="Moore K."/>
            <person name="Hurst S.M."/>
            <person name="Lucas M."/>
            <person name="Rochet M."/>
            <person name="Gaillardin C."/>
            <person name="Tallada V.A."/>
            <person name="Garzon A."/>
            <person name="Thode G."/>
            <person name="Daga R.R."/>
            <person name="Cruzado L."/>
            <person name="Jimenez J."/>
            <person name="Sanchez M."/>
            <person name="del Rey F."/>
            <person name="Benito J."/>
            <person name="Dominguez A."/>
            <person name="Revuelta J.L."/>
            <person name="Moreno S."/>
            <person name="Armstrong J."/>
            <person name="Forsburg S.L."/>
            <person name="Cerutti L."/>
            <person name="Lowe T."/>
            <person name="McCombie W.R."/>
            <person name="Paulsen I."/>
            <person name="Potashkin J."/>
            <person name="Shpakovski G.V."/>
            <person name="Ussery D."/>
            <person name="Barrell B.G."/>
            <person name="Nurse P."/>
        </authorList>
    </citation>
    <scope>NUCLEOTIDE SEQUENCE [LARGE SCALE GENOMIC DNA]</scope>
    <source>
        <strain>972 / ATCC 24843</strain>
    </source>
</reference>
<reference key="2">
    <citation type="journal article" date="2006" name="Nat. Biotechnol.">
        <title>ORFeome cloning and global analysis of protein localization in the fission yeast Schizosaccharomyces pombe.</title>
        <authorList>
            <person name="Matsuyama A."/>
            <person name="Arai R."/>
            <person name="Yashiroda Y."/>
            <person name="Shirai A."/>
            <person name="Kamata A."/>
            <person name="Sekido S."/>
            <person name="Kobayashi Y."/>
            <person name="Hashimoto A."/>
            <person name="Hamamoto M."/>
            <person name="Hiraoka Y."/>
            <person name="Horinouchi S."/>
            <person name="Yoshida M."/>
        </authorList>
    </citation>
    <scope>SUBCELLULAR LOCATION [LARGE SCALE ANALYSIS]</scope>
</reference>
<name>YK68_SCHPO</name>
<accession>Q9US10</accession>
<evidence type="ECO:0000255" key="1"/>
<evidence type="ECO:0000269" key="2">
    <source>
    </source>
</evidence>
<evidence type="ECO:0000305" key="3"/>
<protein>
    <recommendedName>
        <fullName>Uncharacterized membrane protein C6F6.13c</fullName>
    </recommendedName>
</protein>
<feature type="chain" id="PRO_0000340088" description="Uncharacterized membrane protein C6F6.13c">
    <location>
        <begin position="1"/>
        <end position="579"/>
    </location>
</feature>
<feature type="transmembrane region" description="Helical" evidence="1">
    <location>
        <begin position="173"/>
        <end position="193"/>
    </location>
</feature>
<feature type="transmembrane region" description="Helical" evidence="1">
    <location>
        <begin position="196"/>
        <end position="216"/>
    </location>
</feature>
<feature type="transmembrane region" description="Helical" evidence="1">
    <location>
        <begin position="218"/>
        <end position="238"/>
    </location>
</feature>
<dbReference type="EMBL" id="CU329670">
    <property type="protein sequence ID" value="CAB63795.1"/>
    <property type="molecule type" value="Genomic_DNA"/>
</dbReference>
<dbReference type="PIR" id="T50228">
    <property type="entry name" value="T50228"/>
</dbReference>
<dbReference type="SMR" id="Q9US10"/>
<dbReference type="BioGRID" id="279582">
    <property type="interactions" value="1"/>
</dbReference>
<dbReference type="FunCoup" id="Q9US10">
    <property type="interactions" value="12"/>
</dbReference>
<dbReference type="ESTHER" id="schpo-yk68">
    <property type="family name" value="Duf_726"/>
</dbReference>
<dbReference type="iPTMnet" id="Q9US10"/>
<dbReference type="SwissPalm" id="Q9US10"/>
<dbReference type="PaxDb" id="4896-SPAC607.08c.1"/>
<dbReference type="EnsemblFungi" id="SPAC607.08c.1">
    <property type="protein sequence ID" value="SPAC607.08c.1:pep"/>
    <property type="gene ID" value="SPAC607.08c"/>
</dbReference>
<dbReference type="KEGG" id="spo:2543150"/>
<dbReference type="PomBase" id="SPAC607.08c"/>
<dbReference type="VEuPathDB" id="FungiDB:SPAC607.08c"/>
<dbReference type="eggNOG" id="KOG2385">
    <property type="taxonomic scope" value="Eukaryota"/>
</dbReference>
<dbReference type="HOGENOM" id="CLU_007407_0_1_1"/>
<dbReference type="InParanoid" id="Q9US10"/>
<dbReference type="OMA" id="WLSREQY"/>
<dbReference type="PhylomeDB" id="Q9US10"/>
<dbReference type="PRO" id="PR:Q9US10"/>
<dbReference type="Proteomes" id="UP000002485">
    <property type="component" value="Chromosome I"/>
</dbReference>
<dbReference type="GO" id="GO:0005829">
    <property type="term" value="C:cytosol"/>
    <property type="evidence" value="ECO:0007005"/>
    <property type="project" value="PomBase"/>
</dbReference>
<dbReference type="GO" id="GO:0031965">
    <property type="term" value="C:nuclear membrane"/>
    <property type="evidence" value="ECO:0007669"/>
    <property type="project" value="UniProtKB-SubCell"/>
</dbReference>
<dbReference type="GO" id="GO:0005634">
    <property type="term" value="C:nucleus"/>
    <property type="evidence" value="ECO:0007005"/>
    <property type="project" value="PomBase"/>
</dbReference>
<dbReference type="GO" id="GO:0016298">
    <property type="term" value="F:lipase activity"/>
    <property type="evidence" value="ECO:0000304"/>
    <property type="project" value="PomBase"/>
</dbReference>
<dbReference type="GO" id="GO:0016192">
    <property type="term" value="P:vesicle-mediated transport"/>
    <property type="evidence" value="ECO:0000304"/>
    <property type="project" value="PomBase"/>
</dbReference>
<dbReference type="Gene3D" id="3.40.50.1820">
    <property type="entry name" value="alpha/beta hydrolase"/>
    <property type="match status" value="1"/>
</dbReference>
<dbReference type="InterPro" id="IPR029058">
    <property type="entry name" value="AB_hydrolase_fold"/>
</dbReference>
<dbReference type="InterPro" id="IPR007941">
    <property type="entry name" value="DUF726"/>
</dbReference>
<dbReference type="PANTHER" id="PTHR17920:SF22">
    <property type="entry name" value="DUF726 DOMAIN PROTEIN (AFU_ORTHOLOGUE AFUA_2G12860)"/>
    <property type="match status" value="1"/>
</dbReference>
<dbReference type="PANTHER" id="PTHR17920">
    <property type="entry name" value="TRANSMEMBRANE AND COILED-COIL DOMAIN-CONTAINING PROTEIN 4 TMCO4"/>
    <property type="match status" value="1"/>
</dbReference>
<dbReference type="Pfam" id="PF05277">
    <property type="entry name" value="DUF726"/>
    <property type="match status" value="1"/>
</dbReference>
<dbReference type="SUPFAM" id="SSF53474">
    <property type="entry name" value="alpha/beta-Hydrolases"/>
    <property type="match status" value="1"/>
</dbReference>
<gene>
    <name type="ORF">SPAC607.08c</name>
</gene>
<keyword id="KW-0963">Cytoplasm</keyword>
<keyword id="KW-0472">Membrane</keyword>
<keyword id="KW-0539">Nucleus</keyword>
<keyword id="KW-1185">Reference proteome</keyword>
<keyword id="KW-0812">Transmembrane</keyword>
<keyword id="KW-1133">Transmembrane helix</keyword>
<proteinExistence type="inferred from homology"/>
<organism>
    <name type="scientific">Schizosaccharomyces pombe (strain 972 / ATCC 24843)</name>
    <name type="common">Fission yeast</name>
    <dbReference type="NCBI Taxonomy" id="284812"/>
    <lineage>
        <taxon>Eukaryota</taxon>
        <taxon>Fungi</taxon>
        <taxon>Dikarya</taxon>
        <taxon>Ascomycota</taxon>
        <taxon>Taphrinomycotina</taxon>
        <taxon>Schizosaccharomycetes</taxon>
        <taxon>Schizosaccharomycetales</taxon>
        <taxon>Schizosaccharomycetaceae</taxon>
        <taxon>Schizosaccharomyces</taxon>
    </lineage>
</organism>
<sequence>MAEQKIISLFDDDACTRYTILIASTIGEMREKKESIIDNTDPEIVKYLSQLLDVFRENFDTWAMAVVNRTGCALDPSTPKDQVEVKKFRQFSETEKSECFIKCLLLLILSLGNYSPYSRNLLYSIAEKLGLSSIVVYKAELITSSMLLDTFQTMESNQEMYELSGTRKMRRRIAMGLAGLAGGALIGLTGGLAAPFVAAGLGTLFAGLGLGTMIGATYLGTLITSAPMITALFGGFGAKMSMQQMGDVSKGLTDFEFIPLSVQSHLPVTIGISGWLGDYNEVDAAWKSLTVGDKSYYWGDIYALKFEVEALVDLGKSLSRILFSAGLGWVKGEVISRTILAPLAAALWPLSLLKVGNILGNSWRIAFNLSIKAGEALANALCVRAQGMRPVTLIGFSLGARTILECLLHLADRGETNLVENVIVMGAPMPTDAKLWLKMRCVVAGRFVNVYSASDYVLQLVYRVNSAQSTAAGLGPVSLDSNTLENVDVGDLVEGHLQYRWLVAKILKERLGYDNISDAEIQSLAVQEEKYESKQRTYYSQKEQEEEIEQEVLFDASSDTELAIQKKEDEVNEVRENKK</sequence>